<sequence length="41" mass="4735">MLVVEKSINTSYAYSFLGINKCLKKFNIDIVDVNASQKYLY</sequence>
<reference key="1">
    <citation type="journal article" date="1995" name="Plant Mol. Biol. Rep.">
        <title>The chloroplast genome of a chlorophyll a+c-containing alga, Odontella sinensis.</title>
        <authorList>
            <person name="Kowallik K.V."/>
            <person name="Stoebe B."/>
            <person name="Schaffran I."/>
            <person name="Kroth-Pancic P."/>
            <person name="Freier U."/>
        </authorList>
    </citation>
    <scope>NUCLEOTIDE SEQUENCE [LARGE SCALE GENOMIC DNA]</scope>
</reference>
<geneLocation type="chloroplast"/>
<name>YCX5_TRICV</name>
<dbReference type="EMBL" id="Z67753">
    <property type="protein sequence ID" value="CAA91684.1"/>
    <property type="molecule type" value="Genomic_DNA"/>
</dbReference>
<dbReference type="PIR" id="S78311">
    <property type="entry name" value="S78311"/>
</dbReference>
<dbReference type="RefSeq" id="NP_043652.1">
    <property type="nucleotide sequence ID" value="NC_001713.1"/>
</dbReference>
<dbReference type="GeneID" id="1457267"/>
<dbReference type="GO" id="GO:0009507">
    <property type="term" value="C:chloroplast"/>
    <property type="evidence" value="ECO:0007669"/>
    <property type="project" value="UniProtKB-SubCell"/>
</dbReference>
<organism>
    <name type="scientific">Trieres chinensis</name>
    <name type="common">Marine centric diatom</name>
    <name type="synonym">Odontella sinensis</name>
    <dbReference type="NCBI Taxonomy" id="1514140"/>
    <lineage>
        <taxon>Eukaryota</taxon>
        <taxon>Sar</taxon>
        <taxon>Stramenopiles</taxon>
        <taxon>Ochrophyta</taxon>
        <taxon>Bacillariophyta</taxon>
        <taxon>Mediophyceae</taxon>
        <taxon>Biddulphiophycidae</taxon>
        <taxon>Eupodiscales</taxon>
        <taxon>Parodontellaceae</taxon>
        <taxon>Trieres</taxon>
    </lineage>
</organism>
<keyword id="KW-0150">Chloroplast</keyword>
<keyword id="KW-0934">Plastid</keyword>
<proteinExistence type="predicted"/>
<protein>
    <recommendedName>
        <fullName>Uncharacterized 4.7 kDa protein in ycf33-trnY intergenic region</fullName>
    </recommendedName>
    <alternativeName>
        <fullName>ORF41</fullName>
    </alternativeName>
</protein>
<accession>P49831</accession>
<feature type="chain" id="PRO_0000217457" description="Uncharacterized 4.7 kDa protein in ycf33-trnY intergenic region">
    <location>
        <begin position="1"/>
        <end position="41"/>
    </location>
</feature>
<comment type="subcellular location">
    <subcellularLocation>
        <location>Plastid</location>
        <location>Chloroplast</location>
    </subcellularLocation>
</comment>